<proteinExistence type="evidence at transcript level"/>
<dbReference type="EC" id="3.6.1.29"/>
<dbReference type="EMBL" id="CR859098">
    <property type="protein sequence ID" value="CAH91290.1"/>
    <property type="molecule type" value="mRNA"/>
</dbReference>
<dbReference type="RefSeq" id="NP_001125764.1">
    <property type="nucleotide sequence ID" value="NM_001132292.2"/>
</dbReference>
<dbReference type="SMR" id="Q5RAC0"/>
<dbReference type="FunCoup" id="Q5RAC0">
    <property type="interactions" value="672"/>
</dbReference>
<dbReference type="STRING" id="9601.ENSPPYP00000018644"/>
<dbReference type="GlyCosmos" id="Q5RAC0">
    <property type="glycosylation" value="3 sites, No reported glycans"/>
</dbReference>
<dbReference type="Ensembl" id="ENSPPYT00000019383.3">
    <property type="protein sequence ID" value="ENSPPYP00000018644.3"/>
    <property type="gene ID" value="ENSPPYG00000016666.3"/>
</dbReference>
<dbReference type="GeneID" id="100172690"/>
<dbReference type="KEGG" id="pon:100172690"/>
<dbReference type="CTD" id="22875"/>
<dbReference type="eggNOG" id="KOG2645">
    <property type="taxonomic scope" value="Eukaryota"/>
</dbReference>
<dbReference type="InParanoid" id="Q5RAC0"/>
<dbReference type="OMA" id="DVCIDHS"/>
<dbReference type="OrthoDB" id="415411at2759"/>
<dbReference type="Proteomes" id="UP000001595">
    <property type="component" value="Chromosome 6"/>
</dbReference>
<dbReference type="GO" id="GO:0005886">
    <property type="term" value="C:plasma membrane"/>
    <property type="evidence" value="ECO:0007669"/>
    <property type="project" value="UniProtKB-SubCell"/>
</dbReference>
<dbReference type="GO" id="GO:0047710">
    <property type="term" value="F:bis(5'-adenosyl)-triphosphatase activity"/>
    <property type="evidence" value="ECO:0007669"/>
    <property type="project" value="UniProtKB-EC"/>
</dbReference>
<dbReference type="GO" id="GO:0046872">
    <property type="term" value="F:metal ion binding"/>
    <property type="evidence" value="ECO:0007669"/>
    <property type="project" value="UniProtKB-KW"/>
</dbReference>
<dbReference type="GO" id="GO:0007596">
    <property type="term" value="P:blood coagulation"/>
    <property type="evidence" value="ECO:0007669"/>
    <property type="project" value="UniProtKB-KW"/>
</dbReference>
<dbReference type="GO" id="GO:0030194">
    <property type="term" value="P:positive regulation of blood coagulation"/>
    <property type="evidence" value="ECO:0007669"/>
    <property type="project" value="Ensembl"/>
</dbReference>
<dbReference type="GO" id="GO:0046130">
    <property type="term" value="P:purine ribonucleoside catabolic process"/>
    <property type="evidence" value="ECO:0007669"/>
    <property type="project" value="Ensembl"/>
</dbReference>
<dbReference type="CDD" id="cd16018">
    <property type="entry name" value="Enpp"/>
    <property type="match status" value="1"/>
</dbReference>
<dbReference type="FunFam" id="3.40.720.10:FF:000035">
    <property type="entry name" value="Ectonucleotide pyrophosphatase/phosphodiesterase 4 (Putative)"/>
    <property type="match status" value="1"/>
</dbReference>
<dbReference type="FunFam" id="3.30.1360.180:FF:000004">
    <property type="entry name" value="Ectonucleotide pyrophosphatase/phosphodiesterase family member 4"/>
    <property type="match status" value="1"/>
</dbReference>
<dbReference type="Gene3D" id="3.30.1360.180">
    <property type="match status" value="1"/>
</dbReference>
<dbReference type="Gene3D" id="3.40.720.10">
    <property type="entry name" value="Alkaline Phosphatase, subunit A"/>
    <property type="match status" value="1"/>
</dbReference>
<dbReference type="InterPro" id="IPR017850">
    <property type="entry name" value="Alkaline_phosphatase_core_sf"/>
</dbReference>
<dbReference type="InterPro" id="IPR002591">
    <property type="entry name" value="Phosphodiest/P_Trfase"/>
</dbReference>
<dbReference type="PANTHER" id="PTHR10151:SF79">
    <property type="entry name" value="BIS(5'-ADENOSYL)-TRIPHOSPHATASE ENPP4"/>
    <property type="match status" value="1"/>
</dbReference>
<dbReference type="PANTHER" id="PTHR10151">
    <property type="entry name" value="ECTONUCLEOTIDE PYROPHOSPHATASE/PHOSPHODIESTERASE"/>
    <property type="match status" value="1"/>
</dbReference>
<dbReference type="Pfam" id="PF01663">
    <property type="entry name" value="Phosphodiest"/>
    <property type="match status" value="1"/>
</dbReference>
<dbReference type="SUPFAM" id="SSF53649">
    <property type="entry name" value="Alkaline phosphatase-like"/>
    <property type="match status" value="1"/>
</dbReference>
<sequence length="452" mass="51561">MKLLVILLFSGLITGFRSDSSSSLPPKLLLVSFDGFRADYLNNYEFPHLQNFIKEGVLVEHVKNVFITKTFPNHYSIVTGLYEESHGIVANSMYDAVTKKHFSDSNDKDPFWWNEAVPIWVTNQLQENRSSAAAMWPGTDVPIHNTISSYFMNYNSSVSFEERLNNITMWLNNSNPPVTFATLYWEEPDASGHKYGPEDKENMSRVLKKIDDLIGDLVQKLKMLGLWENLNVIITSDHGMTQCSQDRLINLDVCIDHSYYTLIDLSPVAAILPKINRTEVYNRLKNCSSHMNVYLKEDIPNRFYYQHNDRIQPIILVADEGWTIVLNESSQKCDHGYDNSLPSMHPFLAAHGPAFHKGYKHSTINIVDIYPMMCHILGLKPHPNNGTFGHTKCLLVDQWCINLPEAIAIVIGSLLVLTMLTCLIIIMQNRLSVPRPFSRLQLQEDDDDPLIG</sequence>
<evidence type="ECO:0000250" key="1"/>
<evidence type="ECO:0000255" key="2"/>
<evidence type="ECO:0000305" key="3"/>
<gene>
    <name type="primary">ENPP4</name>
</gene>
<name>ENPP4_PONAB</name>
<comment type="function">
    <text evidence="1">Hydrolyzes extracellular Ap3A into AMP and ADP, and Ap4A into AMP and ATP. Ap3A and Ap4A are diadenosine polyphosphates thought to induce proliferation of vascular smooth muscle cells. Acts as a procoagulant, mediating platelet aggregation at the site of nascent thrombus via release of ADP from Ap3A and activation of ADP receptors (By similarity).</text>
</comment>
<comment type="catalytic activity">
    <reaction>
        <text>P(1),P(3)-bis(5'-adenosyl) triphosphate + H2O = AMP + ADP + 2 H(+)</text>
        <dbReference type="Rhea" id="RHEA:13893"/>
        <dbReference type="ChEBI" id="CHEBI:15377"/>
        <dbReference type="ChEBI" id="CHEBI:15378"/>
        <dbReference type="ChEBI" id="CHEBI:58529"/>
        <dbReference type="ChEBI" id="CHEBI:456215"/>
        <dbReference type="ChEBI" id="CHEBI:456216"/>
        <dbReference type="EC" id="3.6.1.29"/>
    </reaction>
</comment>
<comment type="cofactor">
    <cofactor evidence="1">
        <name>Zn(2+)</name>
        <dbReference type="ChEBI" id="CHEBI:29105"/>
    </cofactor>
    <text evidence="1">Binds 2 Zn(2+) ions per subunit.</text>
</comment>
<comment type="subcellular location">
    <subcellularLocation>
        <location evidence="1">Cell membrane</location>
        <topology>Single-pass type I membrane protein</topology>
    </subcellularLocation>
</comment>
<comment type="similarity">
    <text evidence="3">Belongs to the nucleotide pyrophosphatase/phosphodiesterase family.</text>
</comment>
<accession>Q5RAC0</accession>
<reference key="1">
    <citation type="submission" date="2004-11" db="EMBL/GenBank/DDBJ databases">
        <authorList>
            <consortium name="The German cDNA consortium"/>
        </authorList>
    </citation>
    <scope>NUCLEOTIDE SEQUENCE [LARGE SCALE MRNA]</scope>
    <source>
        <tissue>Kidney</tissue>
    </source>
</reference>
<protein>
    <recommendedName>
        <fullName>Bis(5'-adenosyl)-triphosphatase ENPP4</fullName>
        <ecNumber>3.6.1.29</ecNumber>
    </recommendedName>
    <alternativeName>
        <fullName>AP3A hydrolase</fullName>
        <shortName>AP3Aase</shortName>
    </alternativeName>
    <alternativeName>
        <fullName>Ectonucleotide pyrophosphatase/phosphodiesterase family member 4</fullName>
        <shortName>E-NPP 4</shortName>
        <shortName>NPP-4</shortName>
    </alternativeName>
</protein>
<organism>
    <name type="scientific">Pongo abelii</name>
    <name type="common">Sumatran orangutan</name>
    <name type="synonym">Pongo pygmaeus abelii</name>
    <dbReference type="NCBI Taxonomy" id="9601"/>
    <lineage>
        <taxon>Eukaryota</taxon>
        <taxon>Metazoa</taxon>
        <taxon>Chordata</taxon>
        <taxon>Craniata</taxon>
        <taxon>Vertebrata</taxon>
        <taxon>Euteleostomi</taxon>
        <taxon>Mammalia</taxon>
        <taxon>Eutheria</taxon>
        <taxon>Euarchontoglires</taxon>
        <taxon>Primates</taxon>
        <taxon>Haplorrhini</taxon>
        <taxon>Catarrhini</taxon>
        <taxon>Hominidae</taxon>
        <taxon>Pongo</taxon>
    </lineage>
</organism>
<feature type="signal peptide" evidence="2">
    <location>
        <begin position="1"/>
        <end position="15"/>
    </location>
</feature>
<feature type="chain" id="PRO_0000324797" description="Bis(5'-adenosyl)-triphosphatase ENPP4">
    <location>
        <begin position="16"/>
        <end position="452"/>
    </location>
</feature>
<feature type="topological domain" description="Extracellular" evidence="2">
    <location>
        <begin position="16"/>
        <end position="406"/>
    </location>
</feature>
<feature type="transmembrane region" description="Helical" evidence="2">
    <location>
        <begin position="407"/>
        <end position="427"/>
    </location>
</feature>
<feature type="topological domain" description="Cytoplasmic" evidence="2">
    <location>
        <begin position="428"/>
        <end position="452"/>
    </location>
</feature>
<feature type="active site" description="AMP-threonine intermediate" evidence="1">
    <location>
        <position position="70"/>
    </location>
</feature>
<feature type="binding site" evidence="1">
    <location>
        <position position="34"/>
    </location>
    <ligand>
        <name>Zn(2+)</name>
        <dbReference type="ChEBI" id="CHEBI:29105"/>
        <label>1</label>
        <note>catalytic</note>
    </ligand>
</feature>
<feature type="binding site" evidence="1">
    <location>
        <position position="70"/>
    </location>
    <ligand>
        <name>Zn(2+)</name>
        <dbReference type="ChEBI" id="CHEBI:29105"/>
        <label>1</label>
        <note>catalytic</note>
    </ligand>
</feature>
<feature type="binding site" evidence="1">
    <location>
        <position position="91"/>
    </location>
    <ligand>
        <name>substrate</name>
    </ligand>
</feature>
<feature type="binding site" evidence="1">
    <location>
        <position position="154"/>
    </location>
    <ligand>
        <name>substrate</name>
    </ligand>
</feature>
<feature type="binding site" evidence="1">
    <location>
        <position position="189"/>
    </location>
    <ligand>
        <name>substrate</name>
    </ligand>
</feature>
<feature type="binding site" evidence="1">
    <location>
        <position position="189"/>
    </location>
    <ligand>
        <name>Zn(2+)</name>
        <dbReference type="ChEBI" id="CHEBI:29105"/>
        <label>2</label>
        <note>catalytic</note>
    </ligand>
</feature>
<feature type="binding site" evidence="1">
    <location>
        <position position="193"/>
    </location>
    <ligand>
        <name>Zn(2+)</name>
        <dbReference type="ChEBI" id="CHEBI:29105"/>
        <label>2</label>
        <note>catalytic</note>
    </ligand>
</feature>
<feature type="binding site" evidence="1">
    <location>
        <position position="237"/>
    </location>
    <ligand>
        <name>Zn(2+)</name>
        <dbReference type="ChEBI" id="CHEBI:29105"/>
        <label>1</label>
        <note>catalytic</note>
    </ligand>
</feature>
<feature type="binding site" evidence="1">
    <location>
        <position position="238"/>
    </location>
    <ligand>
        <name>Zn(2+)</name>
        <dbReference type="ChEBI" id="CHEBI:29105"/>
        <label>1</label>
        <note>catalytic</note>
    </ligand>
</feature>
<feature type="binding site" evidence="1">
    <location>
        <position position="335"/>
    </location>
    <ligand>
        <name>Zn(2+)</name>
        <dbReference type="ChEBI" id="CHEBI:29105"/>
        <label>2</label>
        <note>catalytic</note>
    </ligand>
</feature>
<feature type="glycosylation site" description="N-linked (GlcNAc...) asparagine" evidence="2">
    <location>
        <position position="155"/>
    </location>
</feature>
<feature type="glycosylation site" description="N-linked (GlcNAc...) asparagine" evidence="2">
    <location>
        <position position="166"/>
    </location>
</feature>
<feature type="glycosylation site" description="N-linked (GlcNAc...) asparagine" evidence="2">
    <location>
        <position position="276"/>
    </location>
</feature>
<feature type="disulfide bond" evidence="1">
    <location>
        <begin position="254"/>
        <end position="287"/>
    </location>
</feature>
<feature type="disulfide bond" evidence="1">
    <location>
        <begin position="393"/>
        <end position="400"/>
    </location>
</feature>
<keyword id="KW-0094">Blood coagulation</keyword>
<keyword id="KW-1003">Cell membrane</keyword>
<keyword id="KW-1015">Disulfide bond</keyword>
<keyword id="KW-0325">Glycoprotein</keyword>
<keyword id="KW-0356">Hemostasis</keyword>
<keyword id="KW-0378">Hydrolase</keyword>
<keyword id="KW-0472">Membrane</keyword>
<keyword id="KW-0479">Metal-binding</keyword>
<keyword id="KW-1185">Reference proteome</keyword>
<keyword id="KW-0732">Signal</keyword>
<keyword id="KW-0812">Transmembrane</keyword>
<keyword id="KW-1133">Transmembrane helix</keyword>
<keyword id="KW-0862">Zinc</keyword>